<reference key="1">
    <citation type="journal article" date="2002" name="Environ. Microbiol.">
        <title>Complete genome sequence and comparative analysis of the metabolically versatile Pseudomonas putida KT2440.</title>
        <authorList>
            <person name="Nelson K.E."/>
            <person name="Weinel C."/>
            <person name="Paulsen I.T."/>
            <person name="Dodson R.J."/>
            <person name="Hilbert H."/>
            <person name="Martins dos Santos V.A.P."/>
            <person name="Fouts D.E."/>
            <person name="Gill S.R."/>
            <person name="Pop M."/>
            <person name="Holmes M."/>
            <person name="Brinkac L.M."/>
            <person name="Beanan M.J."/>
            <person name="DeBoy R.T."/>
            <person name="Daugherty S.C."/>
            <person name="Kolonay J.F."/>
            <person name="Madupu R."/>
            <person name="Nelson W.C."/>
            <person name="White O."/>
            <person name="Peterson J.D."/>
            <person name="Khouri H.M."/>
            <person name="Hance I."/>
            <person name="Chris Lee P."/>
            <person name="Holtzapple E.K."/>
            <person name="Scanlan D."/>
            <person name="Tran K."/>
            <person name="Moazzez A."/>
            <person name="Utterback T.R."/>
            <person name="Rizzo M."/>
            <person name="Lee K."/>
            <person name="Kosack D."/>
            <person name="Moestl D."/>
            <person name="Wedler H."/>
            <person name="Lauber J."/>
            <person name="Stjepandic D."/>
            <person name="Hoheisel J."/>
            <person name="Straetz M."/>
            <person name="Heim S."/>
            <person name="Kiewitz C."/>
            <person name="Eisen J.A."/>
            <person name="Timmis K.N."/>
            <person name="Duesterhoeft A."/>
            <person name="Tuemmler B."/>
            <person name="Fraser C.M."/>
        </authorList>
    </citation>
    <scope>NUCLEOTIDE SEQUENCE [LARGE SCALE GENOMIC DNA]</scope>
    <source>
        <strain>ATCC 47054 / DSM 6125 / CFBP 8728 / NCIMB 11950 / KT2440</strain>
    </source>
</reference>
<reference evidence="7" key="2">
    <citation type="journal article" date="2017" name="Mol. Microbiol.">
        <title>Structurally diverse dehydroshikimate dehydratase variants participate in microbial quinate catabolism.</title>
        <authorList>
            <person name="Peek J."/>
            <person name="Roman J."/>
            <person name="Moran G.R."/>
            <person name="Christendat D."/>
        </authorList>
    </citation>
    <scope>X-RAY CRYSTALLOGRAPHY (2.37 ANGSTROMS) IN COMPLEX WITH MAGNESIUM</scope>
    <scope>FUNCTION</scope>
    <scope>CATALYTIC ACTIVITY</scope>
    <scope>BIOPHYSICOCHEMICAL PROPERTIES</scope>
    <scope>DOMAIN</scope>
    <scope>SUBUNIT</scope>
    <scope>MUTAGENESIS OF HIS-168 AND SER-206</scope>
    <source>
        <strain>ATCC 47054 / DSM 6125 / CFBP 8728 / NCIMB 11950 / KT2440</strain>
    </source>
</reference>
<dbReference type="EC" id="4.2.1.118" evidence="3"/>
<dbReference type="EMBL" id="AE015451">
    <property type="protein sequence ID" value="AAN68163.1"/>
    <property type="molecule type" value="Genomic_DNA"/>
</dbReference>
<dbReference type="RefSeq" id="NP_744699.1">
    <property type="nucleotide sequence ID" value="NC_002947.4"/>
</dbReference>
<dbReference type="RefSeq" id="WP_003250790.1">
    <property type="nucleotide sequence ID" value="NZ_CP169744.1"/>
</dbReference>
<dbReference type="PDB" id="5HMQ">
    <property type="method" value="X-ray"/>
    <property type="resolution" value="2.37 A"/>
    <property type="chains" value="A/B/C/D/E/F=1-635"/>
</dbReference>
<dbReference type="PDBsum" id="5HMQ"/>
<dbReference type="SMR" id="Q88JU3"/>
<dbReference type="STRING" id="160488.PP_2554"/>
<dbReference type="PaxDb" id="160488-PP_2554"/>
<dbReference type="GeneID" id="83680860"/>
<dbReference type="KEGG" id="ppu:PP_2554"/>
<dbReference type="PATRIC" id="fig|160488.4.peg.2713"/>
<dbReference type="eggNOG" id="COG1082">
    <property type="taxonomic scope" value="Bacteria"/>
</dbReference>
<dbReference type="eggNOG" id="COG3185">
    <property type="taxonomic scope" value="Bacteria"/>
</dbReference>
<dbReference type="HOGENOM" id="CLU_029438_0_0_6"/>
<dbReference type="OrthoDB" id="9780241at2"/>
<dbReference type="PhylomeDB" id="Q88JU3"/>
<dbReference type="BioCyc" id="PPUT160488:G1G01-2737-MONOMER"/>
<dbReference type="UniPathway" id="UPA00088"/>
<dbReference type="Proteomes" id="UP000000556">
    <property type="component" value="Chromosome"/>
</dbReference>
<dbReference type="GO" id="GO:0046565">
    <property type="term" value="F:3-dehydroshikimate dehydratase activity"/>
    <property type="evidence" value="ECO:0000314"/>
    <property type="project" value="UniProtKB"/>
</dbReference>
<dbReference type="GO" id="GO:0000287">
    <property type="term" value="F:magnesium ion binding"/>
    <property type="evidence" value="ECO:0000314"/>
    <property type="project" value="UniProtKB"/>
</dbReference>
<dbReference type="GO" id="GO:0046279">
    <property type="term" value="P:3,4-dihydroxybenzoate biosynthetic process"/>
    <property type="evidence" value="ECO:0007669"/>
    <property type="project" value="UniProtKB-UniRule"/>
</dbReference>
<dbReference type="GO" id="GO:0019631">
    <property type="term" value="P:quinate catabolic process"/>
    <property type="evidence" value="ECO:0000250"/>
    <property type="project" value="UniProtKB"/>
</dbReference>
<dbReference type="GO" id="GO:0019633">
    <property type="term" value="P:shikimate catabolic process"/>
    <property type="evidence" value="ECO:0000250"/>
    <property type="project" value="UniProtKB"/>
</dbReference>
<dbReference type="CDD" id="cd08342">
    <property type="entry name" value="HPPD_N_like"/>
    <property type="match status" value="1"/>
</dbReference>
<dbReference type="Gene3D" id="3.10.180.10">
    <property type="entry name" value="2,3-Dihydroxybiphenyl 1,2-Dioxygenase, domain 1"/>
    <property type="match status" value="2"/>
</dbReference>
<dbReference type="Gene3D" id="3.20.20.150">
    <property type="entry name" value="Divalent-metal-dependent TIM barrel enzymes"/>
    <property type="match status" value="1"/>
</dbReference>
<dbReference type="HAMAP" id="MF_02238">
    <property type="entry name" value="DSD"/>
    <property type="match status" value="1"/>
</dbReference>
<dbReference type="InterPro" id="IPR041736">
    <property type="entry name" value="4OHPhenylPyrv_dOase_N"/>
</dbReference>
<dbReference type="InterPro" id="IPR043700">
    <property type="entry name" value="DSD"/>
</dbReference>
<dbReference type="InterPro" id="IPR029068">
    <property type="entry name" value="Glyas_Bleomycin-R_OHBP_Dase"/>
</dbReference>
<dbReference type="InterPro" id="IPR004360">
    <property type="entry name" value="Glyas_Fos-R_dOase_dom"/>
</dbReference>
<dbReference type="InterPro" id="IPR050312">
    <property type="entry name" value="IolE/XylAMocC-like"/>
</dbReference>
<dbReference type="InterPro" id="IPR050009">
    <property type="entry name" value="QuiC"/>
</dbReference>
<dbReference type="InterPro" id="IPR037523">
    <property type="entry name" value="VOC"/>
</dbReference>
<dbReference type="InterPro" id="IPR036237">
    <property type="entry name" value="Xyl_isomerase-like_sf"/>
</dbReference>
<dbReference type="InterPro" id="IPR013022">
    <property type="entry name" value="Xyl_isomerase-like_TIM-brl"/>
</dbReference>
<dbReference type="NCBIfam" id="NF042435">
    <property type="entry name" value="DhshikDhtase_QuiC"/>
    <property type="match status" value="1"/>
</dbReference>
<dbReference type="PANTHER" id="PTHR12110">
    <property type="entry name" value="HYDROXYPYRUVATE ISOMERASE"/>
    <property type="match status" value="1"/>
</dbReference>
<dbReference type="PANTHER" id="PTHR12110:SF21">
    <property type="entry name" value="XYLOSE ISOMERASE-LIKE TIM BARREL DOMAIN-CONTAINING PROTEIN"/>
    <property type="match status" value="1"/>
</dbReference>
<dbReference type="Pfam" id="PF01261">
    <property type="entry name" value="AP_endonuc_2"/>
    <property type="match status" value="1"/>
</dbReference>
<dbReference type="Pfam" id="PF00903">
    <property type="entry name" value="Glyoxalase"/>
    <property type="match status" value="1"/>
</dbReference>
<dbReference type="Pfam" id="PF14696">
    <property type="entry name" value="Glyoxalase_5"/>
    <property type="match status" value="1"/>
</dbReference>
<dbReference type="SUPFAM" id="SSF54593">
    <property type="entry name" value="Glyoxalase/Bleomycin resistance protein/Dihydroxybiphenyl dioxygenase"/>
    <property type="match status" value="1"/>
</dbReference>
<dbReference type="SUPFAM" id="SSF51658">
    <property type="entry name" value="Xylose isomerase-like"/>
    <property type="match status" value="1"/>
</dbReference>
<dbReference type="PROSITE" id="PS51819">
    <property type="entry name" value="VOC"/>
    <property type="match status" value="2"/>
</dbReference>
<protein>
    <recommendedName>
        <fullName evidence="4">3-dehydroshikimate dehydratase</fullName>
        <shortName evidence="4">DSD</shortName>
        <ecNumber evidence="3">4.2.1.118</ecNumber>
    </recommendedName>
</protein>
<organism>
    <name type="scientific">Pseudomonas putida (strain ATCC 47054 / DSM 6125 / CFBP 8728 / NCIMB 11950 / KT2440)</name>
    <dbReference type="NCBI Taxonomy" id="160488"/>
    <lineage>
        <taxon>Bacteria</taxon>
        <taxon>Pseudomonadati</taxon>
        <taxon>Pseudomonadota</taxon>
        <taxon>Gammaproteobacteria</taxon>
        <taxon>Pseudomonadales</taxon>
        <taxon>Pseudomonadaceae</taxon>
        <taxon>Pseudomonas</taxon>
    </lineage>
</organism>
<evidence type="ECO:0000255" key="1">
    <source>
        <dbReference type="HAMAP-Rule" id="MF_02238"/>
    </source>
</evidence>
<evidence type="ECO:0000255" key="2">
    <source>
        <dbReference type="PROSITE-ProRule" id="PRU01163"/>
    </source>
</evidence>
<evidence type="ECO:0000269" key="3">
    <source>
    </source>
</evidence>
<evidence type="ECO:0000303" key="4">
    <source>
    </source>
</evidence>
<evidence type="ECO:0000305" key="5">
    <source>
    </source>
</evidence>
<evidence type="ECO:0000312" key="6">
    <source>
        <dbReference type="EMBL" id="AAN68163.1"/>
    </source>
</evidence>
<evidence type="ECO:0007744" key="7">
    <source>
        <dbReference type="PDB" id="5HMQ"/>
    </source>
</evidence>
<evidence type="ECO:0007829" key="8">
    <source>
        <dbReference type="PDB" id="5HMQ"/>
    </source>
</evidence>
<feature type="chain" id="PRO_0000448878" description="3-dehydroshikimate dehydratase">
    <location>
        <begin position="1"/>
        <end position="635"/>
    </location>
</feature>
<feature type="domain" description="VOC 1" evidence="2">
    <location>
        <begin position="295"/>
        <end position="414"/>
    </location>
</feature>
<feature type="domain" description="VOC 2" evidence="2">
    <location>
        <begin position="440"/>
        <end position="590"/>
    </location>
</feature>
<feature type="binding site" evidence="3 7">
    <location>
        <position position="134"/>
    </location>
    <ligand>
        <name>a divalent metal cation</name>
        <dbReference type="ChEBI" id="CHEBI:60240"/>
        <note>catalytic</note>
    </ligand>
</feature>
<feature type="binding site" evidence="3 7">
    <location>
        <position position="165"/>
    </location>
    <ligand>
        <name>a divalent metal cation</name>
        <dbReference type="ChEBI" id="CHEBI:60240"/>
        <note>catalytic</note>
    </ligand>
</feature>
<feature type="binding site" evidence="3 7">
    <location>
        <position position="191"/>
    </location>
    <ligand>
        <name>a divalent metal cation</name>
        <dbReference type="ChEBI" id="CHEBI:60240"/>
        <note>catalytic</note>
    </ligand>
</feature>
<feature type="binding site" evidence="3 7">
    <location>
        <position position="239"/>
    </location>
    <ligand>
        <name>a divalent metal cation</name>
        <dbReference type="ChEBI" id="CHEBI:60240"/>
        <note>catalytic</note>
    </ligand>
</feature>
<feature type="binding site" evidence="3 7">
    <location>
        <position position="443"/>
    </location>
    <ligand>
        <name>Mg(2+)</name>
        <dbReference type="ChEBI" id="CHEBI:18420"/>
    </ligand>
</feature>
<feature type="binding site" evidence="3 7">
    <location>
        <position position="521"/>
    </location>
    <ligand>
        <name>Mg(2+)</name>
        <dbReference type="ChEBI" id="CHEBI:18420"/>
    </ligand>
</feature>
<feature type="binding site" evidence="3 7">
    <location>
        <position position="599"/>
    </location>
    <ligand>
        <name>Mg(2+)</name>
        <dbReference type="ChEBI" id="CHEBI:18420"/>
    </ligand>
</feature>
<feature type="mutagenesis site" description="21-fold decrease in turnover rate." evidence="3">
    <original>H</original>
    <variation>A</variation>
    <location>
        <position position="168"/>
    </location>
</feature>
<feature type="mutagenesis site" description="10-fold decrease in the affinity for dehydroshikimate without significantly altering the turnover rate." evidence="3">
    <original>S</original>
    <variation>A</variation>
    <location>
        <position position="206"/>
    </location>
</feature>
<feature type="strand" evidence="8">
    <location>
        <begin position="3"/>
        <end position="6"/>
    </location>
</feature>
<feature type="helix" evidence="8">
    <location>
        <begin position="7"/>
        <end position="9"/>
    </location>
</feature>
<feature type="helix" evidence="8">
    <location>
        <begin position="14"/>
        <end position="23"/>
    </location>
</feature>
<feature type="strand" evidence="8">
    <location>
        <begin position="27"/>
        <end position="32"/>
    </location>
</feature>
<feature type="helix" evidence="8">
    <location>
        <begin position="33"/>
        <end position="38"/>
    </location>
</feature>
<feature type="helix" evidence="8">
    <location>
        <begin position="43"/>
        <end position="53"/>
    </location>
</feature>
<feature type="strand" evidence="8">
    <location>
        <begin position="56"/>
        <end position="65"/>
    </location>
</feature>
<feature type="helix" evidence="8">
    <location>
        <begin position="71"/>
        <end position="73"/>
    </location>
</feature>
<feature type="helix" evidence="8">
    <location>
        <begin position="74"/>
        <end position="91"/>
    </location>
</feature>
<feature type="strand" evidence="8">
    <location>
        <begin position="95"/>
        <end position="99"/>
    </location>
</feature>
<feature type="helix" evidence="8">
    <location>
        <begin position="110"/>
        <end position="127"/>
    </location>
</feature>
<feature type="strand" evidence="8">
    <location>
        <begin position="130"/>
        <end position="134"/>
    </location>
</feature>
<feature type="helix" evidence="8">
    <location>
        <begin position="145"/>
        <end position="155"/>
    </location>
</feature>
<feature type="strand" evidence="8">
    <location>
        <begin position="160"/>
        <end position="165"/>
    </location>
</feature>
<feature type="helix" evidence="8">
    <location>
        <begin position="166"/>
        <end position="170"/>
    </location>
</feature>
<feature type="turn" evidence="8">
    <location>
        <begin position="171"/>
        <end position="173"/>
    </location>
</feature>
<feature type="helix" evidence="8">
    <location>
        <begin position="176"/>
        <end position="181"/>
    </location>
</feature>
<feature type="helix" evidence="8">
    <location>
        <begin position="184"/>
        <end position="186"/>
    </location>
</feature>
<feature type="strand" evidence="8">
    <location>
        <begin position="187"/>
        <end position="192"/>
    </location>
</feature>
<feature type="helix" evidence="8">
    <location>
        <begin position="202"/>
        <end position="209"/>
    </location>
</feature>
<feature type="strand" evidence="8">
    <location>
        <begin position="215"/>
        <end position="218"/>
    </location>
</feature>
<feature type="helix" evidence="8">
    <location>
        <begin position="220"/>
        <end position="229"/>
    </location>
</feature>
<feature type="strand" evidence="8">
    <location>
        <begin position="236"/>
        <end position="238"/>
    </location>
</feature>
<feature type="strand" evidence="8">
    <location>
        <begin position="244"/>
        <end position="246"/>
    </location>
</feature>
<feature type="helix" evidence="8">
    <location>
        <begin position="250"/>
        <end position="274"/>
    </location>
</feature>
<feature type="strand" evidence="8">
    <location>
        <begin position="293"/>
        <end position="302"/>
    </location>
</feature>
<feature type="helix" evidence="8">
    <location>
        <begin position="305"/>
        <end position="317"/>
    </location>
</feature>
<feature type="strand" evidence="8">
    <location>
        <begin position="321"/>
        <end position="336"/>
    </location>
</feature>
<feature type="strand" evidence="8">
    <location>
        <begin position="339"/>
        <end position="344"/>
    </location>
</feature>
<feature type="strand" evidence="8">
    <location>
        <begin position="347"/>
        <end position="349"/>
    </location>
</feature>
<feature type="helix" evidence="8">
    <location>
        <begin position="350"/>
        <end position="358"/>
    </location>
</feature>
<feature type="strand" evidence="8">
    <location>
        <begin position="359"/>
        <end position="370"/>
    </location>
</feature>
<feature type="helix" evidence="8">
    <location>
        <begin position="372"/>
        <end position="381"/>
    </location>
</feature>
<feature type="strand" evidence="8">
    <location>
        <begin position="396"/>
        <end position="398"/>
    </location>
</feature>
<feature type="strand" evidence="8">
    <location>
        <begin position="400"/>
        <end position="402"/>
    </location>
</feature>
<feature type="strand" evidence="8">
    <location>
        <begin position="408"/>
        <end position="413"/>
    </location>
</feature>
<feature type="turn" evidence="8">
    <location>
        <begin position="416"/>
        <end position="419"/>
    </location>
</feature>
<feature type="helix" evidence="8">
    <location>
        <begin position="422"/>
        <end position="425"/>
    </location>
</feature>
<feature type="strand" evidence="8">
    <location>
        <begin position="426"/>
        <end position="428"/>
    </location>
</feature>
<feature type="strand" evidence="8">
    <location>
        <begin position="440"/>
        <end position="448"/>
    </location>
</feature>
<feature type="helix" evidence="8">
    <location>
        <begin position="450"/>
        <end position="452"/>
    </location>
</feature>
<feature type="helix" evidence="8">
    <location>
        <begin position="453"/>
        <end position="463"/>
    </location>
</feature>
<feature type="strand" evidence="8">
    <location>
        <begin position="482"/>
        <end position="487"/>
    </location>
</feature>
<feature type="strand" evidence="8">
    <location>
        <begin position="491"/>
        <end position="499"/>
    </location>
</feature>
<feature type="helix" evidence="8">
    <location>
        <begin position="503"/>
        <end position="508"/>
    </location>
</feature>
<feature type="strand" evidence="8">
    <location>
        <begin position="517"/>
        <end position="525"/>
    </location>
</feature>
<feature type="helix" evidence="8">
    <location>
        <begin position="529"/>
        <end position="539"/>
    </location>
</feature>
<feature type="helix" evidence="8">
    <location>
        <begin position="548"/>
        <end position="557"/>
    </location>
</feature>
<feature type="helix" evidence="8">
    <location>
        <begin position="564"/>
        <end position="570"/>
    </location>
</feature>
<feature type="strand" evidence="8">
    <location>
        <begin position="574"/>
        <end position="577"/>
    </location>
</feature>
<feature type="strand" evidence="8">
    <location>
        <begin position="583"/>
        <end position="589"/>
    </location>
</feature>
<feature type="strand" evidence="8">
    <location>
        <begin position="597"/>
        <end position="603"/>
    </location>
</feature>
<feature type="helix" evidence="8">
    <location>
        <begin position="612"/>
        <end position="614"/>
    </location>
</feature>
<feature type="helix" evidence="8">
    <location>
        <begin position="615"/>
        <end position="624"/>
    </location>
</feature>
<keyword id="KW-0002">3D-structure</keyword>
<keyword id="KW-0170">Cobalt</keyword>
<keyword id="KW-0456">Lyase</keyword>
<keyword id="KW-0460">Magnesium</keyword>
<keyword id="KW-0464">Manganese</keyword>
<keyword id="KW-0479">Metal-binding</keyword>
<keyword id="KW-0533">Nickel</keyword>
<keyword id="KW-1185">Reference proteome</keyword>
<sequence length="635" mass="70407">MQRSIATVSLSGTLPEKLEAIAAAGFDGVEIFENDLLYYAGSPRQVRQMCADLGIAITLFQPFRDFEGCRRDRLQKNLDRAERKFDLMQELGTDLVLVCSNVQADALGDEQLLVDDLRLLGEHAGKRGLRIGYEALAWGRHVNTYQQVWNLVRQADHPALGVILDSFHTLSLKGDPSAIRDIPGDKIFFVQMADAPILAMDVLEWSRHFRCFPGQGEMDMAGFLAPILATGYRGPLSLEIFNDGFRAAPTRQNAADGLRSLLYLEEQTRLRLEQENTPIEPGVLFSPPPASAYDGVEFLEFAVDEAVGARLGNWLKRLGFAEAGKHRSKEVQLLRQGDINIVLNAEPYSFGHNFFEAHGPSLCATALRVKDQQAALKRATAFRGQPFRGLVGPNECEVPAVRAPDGSLLYLVEQGTAGHTLYDTDFSLDNNATATGGLRRIDHMALALPAESLDSWVLFYKSLFDFAADDEVVLPDPYGLVKSRALRSQCGTLRLPLNISENRNTAIAHALSSYRGSGVHHIAFDCDDIFREVARAKLAGVPLLEIPLNYYDDLAARFDFDDEFLSELAYYNVLYDRDAQGGELFHVYTEPFEERFFFEIIQRKAGYAGYGAANVAVRLAAMAKARSGAARKPVL</sequence>
<comment type="function">
    <text evidence="3">Catalyzes the conversion of 3-dehydroshikimate to protocatechuate (3,4-dihydroxybenzoate), a common intermediate of quinate and shikimate degradation pathways.</text>
</comment>
<comment type="catalytic activity">
    <reaction evidence="3">
        <text>3-dehydroshikimate = 3,4-dihydroxybenzoate + H2O</text>
        <dbReference type="Rhea" id="RHEA:24848"/>
        <dbReference type="ChEBI" id="CHEBI:15377"/>
        <dbReference type="ChEBI" id="CHEBI:16630"/>
        <dbReference type="ChEBI" id="CHEBI:36241"/>
        <dbReference type="EC" id="4.2.1.118"/>
    </reaction>
    <physiologicalReaction direction="left-to-right" evidence="5">
        <dbReference type="Rhea" id="RHEA:24849"/>
    </physiologicalReaction>
</comment>
<comment type="cofactor">
    <cofactor evidence="3">
        <name>Co(2+)</name>
        <dbReference type="ChEBI" id="CHEBI:48828"/>
    </cofactor>
    <cofactor evidence="3">
        <name>Ni(2+)</name>
        <dbReference type="ChEBI" id="CHEBI:49786"/>
    </cofactor>
    <cofactor evidence="3">
        <name>Mg(2+)</name>
        <dbReference type="ChEBI" id="CHEBI:18420"/>
    </cofactor>
    <cofactor evidence="3">
        <name>Mn(2+)</name>
        <dbReference type="ChEBI" id="CHEBI:29035"/>
    </cofactor>
    <text evidence="3">Requires a divalent metal cation for DSD activity, with a preference for Co(2+) but can also use Ni(2+), Mn(2+) and Mg(2+).</text>
</comment>
<comment type="biophysicochemical properties">
    <kinetics>
        <KM evidence="3">331 uM for 3-dehydroshikimate</KM>
        <text evidence="3">kcat is 163.6 sec(-1).</text>
    </kinetics>
</comment>
<comment type="pathway">
    <text evidence="3">Aromatic compound metabolism; 3,4-dihydroxybenzoate biosynthesis.</text>
</comment>
<comment type="subunit">
    <text evidence="3">Homodimer.</text>
</comment>
<comment type="domain">
    <text evidence="3">Consists of a fusion of two distinct domains: an N-terminal sugar phosphate isomerase-like domain associated with DSD activity and a C-terminal hydroxyphenyl-pyruvate dioxygenase-like domain. This C-terminal domain does not show any 4-hydroxyphenylpyruvate dioxygenase (HPPD) or protocatechuate dioxygenase (PCD) activity, but appears to be important for optimal DSD activity of QuiC1 in vivo.</text>
</comment>
<comment type="similarity">
    <text evidence="1 5">Belongs to the bacterial two-domain DSD family.</text>
</comment>
<name>DSD_PSEPK</name>
<accession>Q88JU3</accession>
<proteinExistence type="evidence at protein level"/>
<gene>
    <name evidence="4" type="primary">quiC1</name>
    <name evidence="6" type="synonym">quiC</name>
    <name evidence="6" type="ordered locus">PP_2554</name>
</gene>